<protein>
    <recommendedName>
        <fullName evidence="1">Inner membrane-spanning protein YciB</fullName>
    </recommendedName>
</protein>
<name>YCIB_SALPK</name>
<dbReference type="EMBL" id="FM200053">
    <property type="protein sequence ID" value="CAR59215.1"/>
    <property type="molecule type" value="Genomic_DNA"/>
</dbReference>
<dbReference type="RefSeq" id="WP_000808682.1">
    <property type="nucleotide sequence ID" value="NC_011147.1"/>
</dbReference>
<dbReference type="KEGG" id="sek:SSPA1061"/>
<dbReference type="HOGENOM" id="CLU_089554_2_0_6"/>
<dbReference type="Proteomes" id="UP000001869">
    <property type="component" value="Chromosome"/>
</dbReference>
<dbReference type="GO" id="GO:0005886">
    <property type="term" value="C:plasma membrane"/>
    <property type="evidence" value="ECO:0007669"/>
    <property type="project" value="UniProtKB-SubCell"/>
</dbReference>
<dbReference type="HAMAP" id="MF_00189">
    <property type="entry name" value="YciB"/>
    <property type="match status" value="1"/>
</dbReference>
<dbReference type="InterPro" id="IPR006008">
    <property type="entry name" value="YciB"/>
</dbReference>
<dbReference type="NCBIfam" id="TIGR00997">
    <property type="entry name" value="ispZ"/>
    <property type="match status" value="1"/>
</dbReference>
<dbReference type="NCBIfam" id="NF001324">
    <property type="entry name" value="PRK00259.1-2"/>
    <property type="match status" value="1"/>
</dbReference>
<dbReference type="NCBIfam" id="NF001325">
    <property type="entry name" value="PRK00259.1-3"/>
    <property type="match status" value="1"/>
</dbReference>
<dbReference type="NCBIfam" id="NF001326">
    <property type="entry name" value="PRK00259.1-4"/>
    <property type="match status" value="1"/>
</dbReference>
<dbReference type="PANTHER" id="PTHR36917:SF1">
    <property type="entry name" value="INNER MEMBRANE-SPANNING PROTEIN YCIB"/>
    <property type="match status" value="1"/>
</dbReference>
<dbReference type="PANTHER" id="PTHR36917">
    <property type="entry name" value="INTRACELLULAR SEPTATION PROTEIN A-RELATED"/>
    <property type="match status" value="1"/>
</dbReference>
<dbReference type="Pfam" id="PF04279">
    <property type="entry name" value="IspA"/>
    <property type="match status" value="1"/>
</dbReference>
<reference key="1">
    <citation type="journal article" date="2009" name="BMC Genomics">
        <title>Pseudogene accumulation in the evolutionary histories of Salmonella enterica serovars Paratyphi A and Typhi.</title>
        <authorList>
            <person name="Holt K.E."/>
            <person name="Thomson N.R."/>
            <person name="Wain J."/>
            <person name="Langridge G.C."/>
            <person name="Hasan R."/>
            <person name="Bhutta Z.A."/>
            <person name="Quail M.A."/>
            <person name="Norbertczak H."/>
            <person name="Walker D."/>
            <person name="Simmonds M."/>
            <person name="White B."/>
            <person name="Bason N."/>
            <person name="Mungall K."/>
            <person name="Dougan G."/>
            <person name="Parkhill J."/>
        </authorList>
    </citation>
    <scope>NUCLEOTIDE SEQUENCE [LARGE SCALE GENOMIC DNA]</scope>
    <source>
        <strain>AKU_12601</strain>
    </source>
</reference>
<comment type="function">
    <text evidence="1">Plays a role in cell envelope biogenesis, maintenance of cell envelope integrity and membrane homeostasis.</text>
</comment>
<comment type="subcellular location">
    <subcellularLocation>
        <location evidence="1">Cell inner membrane</location>
        <topology evidence="1">Multi-pass membrane protein</topology>
    </subcellularLocation>
</comment>
<comment type="similarity">
    <text evidence="1">Belongs to the YciB family.</text>
</comment>
<sequence length="179" mass="20763">MKQFLDFLPLVVFFAFYKLYDIYAATSALIVATAIVLIYSWVRYRKIEKMALITFVLVAVFGGLTLFFHNDEFIKWKVTVIYALFAGALLISQWVMKKPLIQRMLGKELALPQQVWSKLNLAWALFFIACGLANIYIAFWLPQNIWVNFKVFGLTALTLIFTLLSGVYIYRHLPQEDKS</sequence>
<organism>
    <name type="scientific">Salmonella paratyphi A (strain AKU_12601)</name>
    <dbReference type="NCBI Taxonomy" id="554290"/>
    <lineage>
        <taxon>Bacteria</taxon>
        <taxon>Pseudomonadati</taxon>
        <taxon>Pseudomonadota</taxon>
        <taxon>Gammaproteobacteria</taxon>
        <taxon>Enterobacterales</taxon>
        <taxon>Enterobacteriaceae</taxon>
        <taxon>Salmonella</taxon>
    </lineage>
</organism>
<accession>B5BIB2</accession>
<feature type="chain" id="PRO_1000098896" description="Inner membrane-spanning protein YciB">
    <location>
        <begin position="1"/>
        <end position="179"/>
    </location>
</feature>
<feature type="transmembrane region" description="Helical" evidence="1">
    <location>
        <begin position="22"/>
        <end position="42"/>
    </location>
</feature>
<feature type="transmembrane region" description="Helical" evidence="1">
    <location>
        <begin position="50"/>
        <end position="70"/>
    </location>
</feature>
<feature type="transmembrane region" description="Helical" evidence="1">
    <location>
        <begin position="76"/>
        <end position="96"/>
    </location>
</feature>
<feature type="transmembrane region" description="Helical" evidence="1">
    <location>
        <begin position="121"/>
        <end position="141"/>
    </location>
</feature>
<feature type="transmembrane region" description="Helical" evidence="1">
    <location>
        <begin position="149"/>
        <end position="169"/>
    </location>
</feature>
<gene>
    <name evidence="1" type="primary">yciB</name>
    <name type="ordered locus">SSPA1061</name>
</gene>
<keyword id="KW-0997">Cell inner membrane</keyword>
<keyword id="KW-1003">Cell membrane</keyword>
<keyword id="KW-0472">Membrane</keyword>
<keyword id="KW-0812">Transmembrane</keyword>
<keyword id="KW-1133">Transmembrane helix</keyword>
<evidence type="ECO:0000255" key="1">
    <source>
        <dbReference type="HAMAP-Rule" id="MF_00189"/>
    </source>
</evidence>
<proteinExistence type="inferred from homology"/>